<feature type="chain" id="PRO_0000274590" description="Speckle-type POZ protein-like A">
    <location>
        <begin position="1"/>
        <end position="392"/>
    </location>
</feature>
<feature type="domain" description="MATH" evidence="3">
    <location>
        <begin position="31"/>
        <end position="161"/>
    </location>
</feature>
<feature type="domain" description="BTB" evidence="2">
    <location>
        <begin position="200"/>
        <end position="267"/>
    </location>
</feature>
<keyword id="KW-0539">Nucleus</keyword>
<keyword id="KW-1185">Reference proteome</keyword>
<keyword id="KW-0833">Ubl conjugation pathway</keyword>
<gene>
    <name type="primary">spopla</name>
    <name type="synonym">spopl</name>
    <name type="ORF">zgc:101524</name>
</gene>
<accession>Q5BL35</accession>
<sequence>MSGVPTPPPPGEMSSGPVAESWCYTQVKVVKFSYMWTINNFSFCREEMGEVLKSSTFSSGPNDKMKWCLRVNPKGLDDESKDYLSLYLLLVSCPKSEVRAKFKFSLLNAKREETKAMESQRAYRFVQGKDWGFKKFIRRDFLLDEANGLLPDDKLTLFCEVSVVQDSVNISGQSNMNMLKVPECQLSDDLGNLWECSRFTDCSLYVGGQEFKAHKSILAARSPVFNAMFEHEMEESKKNRVDISDVEPEVFKEMMGFIYTGKAPNLEKMADSLLAAADKYALERLKVMCEEALCNSLSVENVADTLILADLHSAEQLKAQAIDFINRCSVLRQLGCKDGKNWNSNHATDIMETAGWKSMIQSHPHLVAEAFRALASAQCPHFGLPRKRLKQS</sequence>
<organism>
    <name type="scientific">Danio rerio</name>
    <name type="common">Zebrafish</name>
    <name type="synonym">Brachydanio rerio</name>
    <dbReference type="NCBI Taxonomy" id="7955"/>
    <lineage>
        <taxon>Eukaryota</taxon>
        <taxon>Metazoa</taxon>
        <taxon>Chordata</taxon>
        <taxon>Craniata</taxon>
        <taxon>Vertebrata</taxon>
        <taxon>Euteleostomi</taxon>
        <taxon>Actinopterygii</taxon>
        <taxon>Neopterygii</taxon>
        <taxon>Teleostei</taxon>
        <taxon>Ostariophysi</taxon>
        <taxon>Cypriniformes</taxon>
        <taxon>Danionidae</taxon>
        <taxon>Danioninae</taxon>
        <taxon>Danio</taxon>
    </lineage>
</organism>
<reference key="1">
    <citation type="submission" date="2005-03" db="EMBL/GenBank/DDBJ databases">
        <authorList>
            <consortium name="NIH - Zebrafish Gene Collection (ZGC) project"/>
        </authorList>
    </citation>
    <scope>NUCLEOTIDE SEQUENCE [LARGE SCALE MRNA]</scope>
    <source>
        <strain>SJD</strain>
    </source>
</reference>
<reference key="2">
    <citation type="journal article" date="2006" name="Dev. Cell">
        <title>A hedgehog-induced BTB protein modulates hedgehog signaling by degrading Ci/Gli transcription factor.</title>
        <authorList>
            <person name="Zhang Q."/>
            <person name="Zhang L."/>
            <person name="Wang B."/>
            <person name="Ou C.-Y."/>
            <person name="Chien C.-T."/>
            <person name="Jiang J."/>
        </authorList>
    </citation>
    <scope>IDENTIFICATION</scope>
</reference>
<protein>
    <recommendedName>
        <fullName>Speckle-type POZ protein-like A</fullName>
    </recommendedName>
    <alternativeName>
        <fullName>HIB homolog 2</fullName>
    </alternativeName>
</protein>
<name>SPOLA_DANRE</name>
<evidence type="ECO:0000250" key="1"/>
<evidence type="ECO:0000255" key="2">
    <source>
        <dbReference type="PROSITE-ProRule" id="PRU00037"/>
    </source>
</evidence>
<evidence type="ECO:0000255" key="3">
    <source>
        <dbReference type="PROSITE-ProRule" id="PRU00129"/>
    </source>
</evidence>
<evidence type="ECO:0000305" key="4"/>
<comment type="function">
    <text evidence="1">Component of a cullin-RING-based BCR (BTB-CUL3-RBX1) E3 ubiquitin-protein ligase complex that mediates the ubiquitination and subsequent proteasomal degradation of target proteins, but with relatively low efficiency.</text>
</comment>
<comment type="pathway">
    <text>Protein modification; protein ubiquitination.</text>
</comment>
<comment type="subunit">
    <text evidence="1">Homodimer. Heterodimer with SPOP. Component of cullin-RING-based BCR (BTB-CUL3-RBX1) E3 ubiquitin-protein ligase complexes containing homodimeric SPOPL or the heterodimer formed by SPOP and SPOPL (By similarity).</text>
</comment>
<comment type="subcellular location">
    <subcellularLocation>
        <location evidence="1">Nucleus</location>
    </subcellularLocation>
</comment>
<comment type="similarity">
    <text evidence="4">Belongs to the Tdpoz family.</text>
</comment>
<proteinExistence type="evidence at transcript level"/>
<dbReference type="EMBL" id="BC090815">
    <property type="protein sequence ID" value="AAH90815.1"/>
    <property type="molecule type" value="mRNA"/>
</dbReference>
<dbReference type="RefSeq" id="NP_001013465.1">
    <property type="nucleotide sequence ID" value="NM_001013447.1"/>
</dbReference>
<dbReference type="SMR" id="Q5BL35"/>
<dbReference type="FunCoup" id="Q5BL35">
    <property type="interactions" value="1051"/>
</dbReference>
<dbReference type="STRING" id="7955.ENSDARP00000026361"/>
<dbReference type="PaxDb" id="7955-ENSDARP00000110922"/>
<dbReference type="Ensembl" id="ENSDART00000011922">
    <property type="protein sequence ID" value="ENSDARP00000026361"/>
    <property type="gene ID" value="ENSDARG00000010563"/>
</dbReference>
<dbReference type="Ensembl" id="ENSDART00000162818">
    <property type="protein sequence ID" value="ENSDARP00000134710"/>
    <property type="gene ID" value="ENSDARG00000010563"/>
</dbReference>
<dbReference type="GeneID" id="541318"/>
<dbReference type="KEGG" id="dre:541318"/>
<dbReference type="AGR" id="ZFIN:ZDB-GENE-050320-3"/>
<dbReference type="CTD" id="541318"/>
<dbReference type="ZFIN" id="ZDB-GENE-050320-3">
    <property type="gene designation" value="spopla"/>
</dbReference>
<dbReference type="eggNOG" id="KOG1987">
    <property type="taxonomic scope" value="Eukaryota"/>
</dbReference>
<dbReference type="HOGENOM" id="CLU_004253_2_0_1"/>
<dbReference type="InParanoid" id="Q5BL35"/>
<dbReference type="OMA" id="GEIFTAH"/>
<dbReference type="OrthoDB" id="6359816at2759"/>
<dbReference type="PhylomeDB" id="Q5BL35"/>
<dbReference type="Reactome" id="R-DRE-5632684">
    <property type="pathway name" value="Hedgehog 'on' state"/>
</dbReference>
<dbReference type="UniPathway" id="UPA00143"/>
<dbReference type="PRO" id="PR:Q5BL35"/>
<dbReference type="Proteomes" id="UP000000437">
    <property type="component" value="Chromosome 9"/>
</dbReference>
<dbReference type="Bgee" id="ENSDARG00000010563">
    <property type="expression patterns" value="Expressed in blastula and 21 other cell types or tissues"/>
</dbReference>
<dbReference type="ExpressionAtlas" id="Q5BL35">
    <property type="expression patterns" value="baseline"/>
</dbReference>
<dbReference type="GO" id="GO:0031463">
    <property type="term" value="C:Cul3-RING ubiquitin ligase complex"/>
    <property type="evidence" value="ECO:0000250"/>
    <property type="project" value="UniProtKB"/>
</dbReference>
<dbReference type="GO" id="GO:0005737">
    <property type="term" value="C:cytoplasm"/>
    <property type="evidence" value="ECO:0000318"/>
    <property type="project" value="GO_Central"/>
</dbReference>
<dbReference type="GO" id="GO:0005634">
    <property type="term" value="C:nucleus"/>
    <property type="evidence" value="ECO:0000318"/>
    <property type="project" value="GO_Central"/>
</dbReference>
<dbReference type="GO" id="GO:0031625">
    <property type="term" value="F:ubiquitin protein ligase binding"/>
    <property type="evidence" value="ECO:0000318"/>
    <property type="project" value="GO_Central"/>
</dbReference>
<dbReference type="GO" id="GO:0031397">
    <property type="term" value="P:negative regulation of protein ubiquitination"/>
    <property type="evidence" value="ECO:0000250"/>
    <property type="project" value="UniProtKB"/>
</dbReference>
<dbReference type="GO" id="GO:0043161">
    <property type="term" value="P:proteasome-mediated ubiquitin-dependent protein catabolic process"/>
    <property type="evidence" value="ECO:0000250"/>
    <property type="project" value="UniProtKB"/>
</dbReference>
<dbReference type="GO" id="GO:0016567">
    <property type="term" value="P:protein ubiquitination"/>
    <property type="evidence" value="ECO:0007669"/>
    <property type="project" value="UniProtKB-UniPathway"/>
</dbReference>
<dbReference type="GO" id="GO:0030162">
    <property type="term" value="P:regulation of proteolysis"/>
    <property type="evidence" value="ECO:0000318"/>
    <property type="project" value="GO_Central"/>
</dbReference>
<dbReference type="CDD" id="cd18519">
    <property type="entry name" value="BACK_SPOPL"/>
    <property type="match status" value="1"/>
</dbReference>
<dbReference type="CDD" id="cd18343">
    <property type="entry name" value="BTB_POZ_SPOPL"/>
    <property type="match status" value="1"/>
</dbReference>
<dbReference type="FunFam" id="2.60.210.10:FF:000028">
    <property type="entry name" value="Speckle-type POZ protein-like"/>
    <property type="match status" value="1"/>
</dbReference>
<dbReference type="FunFam" id="3.30.710.10:FF:000008">
    <property type="entry name" value="Speckle-type POZ protein-like a"/>
    <property type="match status" value="1"/>
</dbReference>
<dbReference type="Gene3D" id="6.10.250.3030">
    <property type="match status" value="1"/>
</dbReference>
<dbReference type="Gene3D" id="6.20.250.50">
    <property type="match status" value="1"/>
</dbReference>
<dbReference type="Gene3D" id="2.60.210.10">
    <property type="entry name" value="Apoptosis, Tumor Necrosis Factor Receptor Associated Protein 2, Chain A"/>
    <property type="match status" value="1"/>
</dbReference>
<dbReference type="Gene3D" id="3.30.710.10">
    <property type="entry name" value="Potassium Channel Kv1.1, Chain A"/>
    <property type="match status" value="1"/>
</dbReference>
<dbReference type="InterPro" id="IPR000210">
    <property type="entry name" value="BTB/POZ_dom"/>
</dbReference>
<dbReference type="InterPro" id="IPR002083">
    <property type="entry name" value="MATH/TRAF_dom"/>
</dbReference>
<dbReference type="InterPro" id="IPR011333">
    <property type="entry name" value="SKP1/BTB/POZ_sf"/>
</dbReference>
<dbReference type="InterPro" id="IPR008974">
    <property type="entry name" value="TRAF-like"/>
</dbReference>
<dbReference type="PANTHER" id="PTHR24413">
    <property type="entry name" value="SPECKLE-TYPE POZ PROTEIN"/>
    <property type="match status" value="1"/>
</dbReference>
<dbReference type="Pfam" id="PF00651">
    <property type="entry name" value="BTB"/>
    <property type="match status" value="1"/>
</dbReference>
<dbReference type="Pfam" id="PF22486">
    <property type="entry name" value="MATH_2"/>
    <property type="match status" value="1"/>
</dbReference>
<dbReference type="SMART" id="SM00225">
    <property type="entry name" value="BTB"/>
    <property type="match status" value="1"/>
</dbReference>
<dbReference type="SMART" id="SM00061">
    <property type="entry name" value="MATH"/>
    <property type="match status" value="1"/>
</dbReference>
<dbReference type="SUPFAM" id="SSF54695">
    <property type="entry name" value="POZ domain"/>
    <property type="match status" value="1"/>
</dbReference>
<dbReference type="SUPFAM" id="SSF49599">
    <property type="entry name" value="TRAF domain-like"/>
    <property type="match status" value="1"/>
</dbReference>
<dbReference type="PROSITE" id="PS50097">
    <property type="entry name" value="BTB"/>
    <property type="match status" value="1"/>
</dbReference>
<dbReference type="PROSITE" id="PS50144">
    <property type="entry name" value="MATH"/>
    <property type="match status" value="1"/>
</dbReference>